<name>PYG2_MASLA</name>
<gene>
    <name type="primary">cpcG2</name>
</gene>
<accession>P29732</accession>
<feature type="chain" id="PRO_0000199251" description="Phycobilisome rod-core linker polypeptide CpcG2">
    <location>
        <begin position="1"/>
        <end position="247"/>
    </location>
</feature>
<feature type="domain" description="PBS-linker" evidence="2">
    <location>
        <begin position="11"/>
        <end position="189"/>
    </location>
</feature>
<sequence length="247" mass="28707">MAIPLLQYKPSSQNQRVPGYEVPNEDTPRIYRLEDAPSYSEIQELIWAAYRQIFSEHEILKFHRQINLESQLKNRTITVRDFIRGLAKSEAFQRLVVETNSNYRIVEISLKRILGRAPYNREEEIAWSIKIATDGFGGFVDALVDSEEYQINFGDNTVPYQRRRFKDRPFNLVTPRYGNYWRDKLENERYIAGDIKNFLDLAKSIEIKTVSYQPVSTANISIPDTTRNTVPRGIPVSVNPSASFPLR</sequence>
<evidence type="ECO:0000250" key="1"/>
<evidence type="ECO:0000255" key="2">
    <source>
        <dbReference type="PROSITE-ProRule" id="PRU00775"/>
    </source>
</evidence>
<proteinExistence type="inferred from homology"/>
<reference key="1">
    <citation type="journal article" date="1992" name="Eur. J. Biochem.">
        <title>Structure of the genes encoding the rod-core linker polypeptides of Mastigocladus laminosus phycobilisomes and functional aspects of the phycobiliprotein/linker-polypeptide interactions.</title>
        <authorList>
            <person name="Glauser M."/>
            <person name="Stirewalt V.L."/>
            <person name="Bryant D.A."/>
            <person name="Sidler W."/>
            <person name="Zuber H."/>
        </authorList>
    </citation>
    <scope>NUCLEOTIDE SEQUENCE [GENOMIC DNA]</scope>
    <source>
        <strain>PCC 7603</strain>
    </source>
</reference>
<organism>
    <name type="scientific">Mastigocladus laminosus</name>
    <name type="common">Fischerella sp.</name>
    <dbReference type="NCBI Taxonomy" id="83541"/>
    <lineage>
        <taxon>Bacteria</taxon>
        <taxon>Bacillati</taxon>
        <taxon>Cyanobacteriota</taxon>
        <taxon>Cyanophyceae</taxon>
        <taxon>Nostocales</taxon>
        <taxon>Hapalosiphonaceae</taxon>
        <taxon>Mastigocladus</taxon>
    </lineage>
</organism>
<keyword id="KW-0042">Antenna complex</keyword>
<keyword id="KW-0472">Membrane</keyword>
<keyword id="KW-0602">Photosynthesis</keyword>
<keyword id="KW-0605">Phycobilisome</keyword>
<keyword id="KW-0793">Thylakoid</keyword>
<comment type="function">
    <text evidence="1">Rod-core linker protein required for attachment of phycocyanin to allophycocyanin in cores of phycobilisomes.</text>
</comment>
<comment type="function">
    <text evidence="1">Linker polypeptides determine the state of aggregation and the location of the disk-shaped phycobiliprotein units within the phycobilisome and modulate their spectroscopic properties in order to mediate a directed and optimal energy transfer.</text>
</comment>
<comment type="subunit">
    <text evidence="1">The phycobilisome is a hemidiscoidal structure that is composed of two distinct substructures: a core complex and a number of rods radiating from the core.</text>
</comment>
<comment type="subcellular location">
    <subcellularLocation>
        <location evidence="1">Cellular thylakoid membrane</location>
        <topology evidence="1">Peripheral membrane protein</topology>
        <orientation evidence="1">Cytoplasmic side</orientation>
    </subcellularLocation>
</comment>
<comment type="similarity">
    <text evidence="2">Belongs to the phycobilisome linker protein family.</text>
</comment>
<dbReference type="EMBL" id="X59763">
    <property type="protein sequence ID" value="CAA42434.1"/>
    <property type="molecule type" value="Genomic_DNA"/>
</dbReference>
<dbReference type="SMR" id="P29732"/>
<dbReference type="GO" id="GO:0030089">
    <property type="term" value="C:phycobilisome"/>
    <property type="evidence" value="ECO:0007669"/>
    <property type="project" value="UniProtKB-KW"/>
</dbReference>
<dbReference type="GO" id="GO:0031676">
    <property type="term" value="C:plasma membrane-derived thylakoid membrane"/>
    <property type="evidence" value="ECO:0007669"/>
    <property type="project" value="UniProtKB-SubCell"/>
</dbReference>
<dbReference type="GO" id="GO:0015979">
    <property type="term" value="P:photosynthesis"/>
    <property type="evidence" value="ECO:0007669"/>
    <property type="project" value="UniProtKB-KW"/>
</dbReference>
<dbReference type="Gene3D" id="1.10.3130.20">
    <property type="entry name" value="Phycobilisome linker domain"/>
    <property type="match status" value="1"/>
</dbReference>
<dbReference type="InterPro" id="IPR001297">
    <property type="entry name" value="PBS_linker_dom"/>
</dbReference>
<dbReference type="InterPro" id="IPR038255">
    <property type="entry name" value="PBS_linker_sf"/>
</dbReference>
<dbReference type="InterPro" id="IPR016470">
    <property type="entry name" value="Phycobilisome"/>
</dbReference>
<dbReference type="PANTHER" id="PTHR34011">
    <property type="entry name" value="PHYCOBILISOME 32.1 KDA LINKER POLYPEPTIDE, PHYCOCYANIN-ASSOCIATED, ROD 2-RELATED"/>
    <property type="match status" value="1"/>
</dbReference>
<dbReference type="Pfam" id="PF00427">
    <property type="entry name" value="PBS_linker_poly"/>
    <property type="match status" value="1"/>
</dbReference>
<dbReference type="PIRSF" id="PIRSF005898">
    <property type="entry name" value="Phycobilisome_CpeC/CpcI"/>
    <property type="match status" value="1"/>
</dbReference>
<dbReference type="PROSITE" id="PS51445">
    <property type="entry name" value="PBS_LINKER"/>
    <property type="match status" value="1"/>
</dbReference>
<protein>
    <recommendedName>
        <fullName>Phycobilisome rod-core linker polypeptide CpcG2</fullName>
    </recommendedName>
    <alternativeName>
        <fullName>L-RC 28.7</fullName>
    </alternativeName>
</protein>